<organism>
    <name type="scientific">Amsacta moorei entomopoxvirus</name>
    <name type="common">AmEPV</name>
    <dbReference type="NCBI Taxonomy" id="28321"/>
    <lineage>
        <taxon>Viruses</taxon>
        <taxon>Varidnaviria</taxon>
        <taxon>Bamfordvirae</taxon>
        <taxon>Nucleocytoviricota</taxon>
        <taxon>Pokkesviricetes</taxon>
        <taxon>Chitovirales</taxon>
        <taxon>Poxviridae</taxon>
        <taxon>Entomopoxvirinae</taxon>
        <taxon>Betaentomopoxvirus</taxon>
    </lineage>
</organism>
<name>Y014_AMEPV</name>
<keyword id="KW-0433">Leucine-rich repeat</keyword>
<keyword id="KW-1185">Reference proteome</keyword>
<keyword id="KW-0677">Repeat</keyword>
<sequence>MDLLNSDIILINILKYYNLKKIIINRDNVININILKKLVNLEELHIIYYDNNILNNIPENIKSLYISNLNIINLNFITKLKNITYLDISYNKNSNISNIILPHSIEFLNCESCNINDYNFINNLVNLKKLIISKNKFGNFNNVFPISIVELNMESIQIKDYKFIEKLINLKKLDISFNVKKNNIHLIKFPKSITHLCDYQSYKENYNYLKNLSNIIEYEFDDTIDVKLSDIDISKYYNLQYLDIQNCEINTDILLCHTKLKKIKINFNNSKKNIIIDLPISLECLKISNNFNINNYYFLTQLIRLKKIKIVNSYINILNACKSIEIIKFISCKSTYNFNFNCLEKYKKLDTLSLGFNNIYNLNECILPISIRQIIINNVEIIKKSNFLNNLYNLEYFEINSIICNDIITINLSKIKIKHFKIIYCNDTLFNIMLPDTIEIIEYIHDKNINLDWKKYKNLKKIKTLNNMKDILYKIYKNTNVEIEII</sequence>
<accession>P28854</accession>
<accession>Q9EN32</accession>
<proteinExistence type="predicted"/>
<organismHost>
    <name type="scientific">Amsacta</name>
    <dbReference type="NCBI Taxonomy" id="340055"/>
</organismHost>
<protein>
    <recommendedName>
        <fullName>Uncharacterized leucine-rich repeat-containing protein AMV014/Q3</fullName>
    </recommendedName>
</protein>
<feature type="chain" id="PRO_0000099760" description="Uncharacterized leucine-rich repeat-containing protein AMV014/Q3">
    <location>
        <begin position="1"/>
        <end position="486"/>
    </location>
</feature>
<feature type="repeat" description="LRR 1">
    <location>
        <begin position="18"/>
        <end position="39"/>
    </location>
</feature>
<feature type="repeat" description="LRR 2">
    <location>
        <begin position="43"/>
        <end position="59"/>
    </location>
</feature>
<feature type="repeat" description="LRR 3">
    <location>
        <begin position="60"/>
        <end position="81"/>
    </location>
</feature>
<feature type="repeat" description="LRR 4">
    <location>
        <begin position="82"/>
        <end position="103"/>
    </location>
</feature>
<feature type="repeat" description="LRR 5">
    <location>
        <begin position="104"/>
        <end position="125"/>
    </location>
</feature>
<feature type="repeat" description="LRR 6">
    <location>
        <begin position="126"/>
        <end position="147"/>
    </location>
</feature>
<feature type="repeat" description="LRR 7">
    <location>
        <begin position="148"/>
        <end position="168"/>
    </location>
</feature>
<feature type="repeat" description="LRR 8">
    <location>
        <begin position="169"/>
        <end position="190"/>
    </location>
</feature>
<feature type="repeat" description="LRR 9">
    <location>
        <begin position="198"/>
        <end position="219"/>
    </location>
</feature>
<gene>
    <name type="ordered locus">AMV014</name>
    <name type="ORF">Q3</name>
</gene>
<reference key="1">
    <citation type="journal article" date="2000" name="Virology">
        <title>Complete genomic sequence of the Amsacta moorei entomopoxvirus: analysis and comparison with other poxviruses.</title>
        <authorList>
            <person name="Bawden A.L."/>
            <person name="Glassberg K.J."/>
            <person name="Diggans J."/>
            <person name="Shaw R."/>
            <person name="Farmerie W."/>
            <person name="Moyer R.W."/>
        </authorList>
    </citation>
    <scope>NUCLEOTIDE SEQUENCE [LARGE SCALE GENOMIC DNA]</scope>
</reference>
<reference key="2">
    <citation type="journal article" date="1992" name="Virology">
        <title>Mapping and molecular characterization of a functional thymidine kinase from Amsacta moorei entomopoxvirus.</title>
        <authorList>
            <person name="Gruidl M.E."/>
            <person name="Hall R.L."/>
            <person name="Moyer R.W."/>
        </authorList>
    </citation>
    <scope>NUCLEOTIDE SEQUENCE [GENOMIC DNA] OF 1-220</scope>
</reference>
<dbReference type="EMBL" id="AF250284">
    <property type="protein sequence ID" value="AAG02720.1"/>
    <property type="molecule type" value="Genomic_DNA"/>
</dbReference>
<dbReference type="EMBL" id="M80924">
    <property type="protein sequence ID" value="AAA42387.1"/>
    <property type="molecule type" value="Genomic_DNA"/>
</dbReference>
<dbReference type="PIR" id="C40818">
    <property type="entry name" value="C40818"/>
</dbReference>
<dbReference type="RefSeq" id="NP_064796.1">
    <property type="nucleotide sequence ID" value="NC_002520.1"/>
</dbReference>
<dbReference type="SMR" id="P28854"/>
<dbReference type="GeneID" id="1494604"/>
<dbReference type="KEGG" id="vg:1494604"/>
<dbReference type="OrthoDB" id="21690at10239"/>
<dbReference type="Proteomes" id="UP000000872">
    <property type="component" value="Genome"/>
</dbReference>
<dbReference type="Gene3D" id="3.80.10.10">
    <property type="entry name" value="Ribonuclease Inhibitor"/>
    <property type="match status" value="2"/>
</dbReference>
<dbReference type="InterPro" id="IPR032675">
    <property type="entry name" value="LRR_dom_sf"/>
</dbReference>
<dbReference type="SUPFAM" id="SSF52058">
    <property type="entry name" value="L domain-like"/>
    <property type="match status" value="1"/>
</dbReference>